<reference key="1">
    <citation type="journal article" date="2000" name="Nucleic Acids Res.">
        <title>Complete genome sequence of the alkaliphilic bacterium Bacillus halodurans and genomic sequence comparison with Bacillus subtilis.</title>
        <authorList>
            <person name="Takami H."/>
            <person name="Nakasone K."/>
            <person name="Takaki Y."/>
            <person name="Maeno G."/>
            <person name="Sasaki R."/>
            <person name="Masui N."/>
            <person name="Fuji F."/>
            <person name="Hirama C."/>
            <person name="Nakamura Y."/>
            <person name="Ogasawara N."/>
            <person name="Kuhara S."/>
            <person name="Horikoshi K."/>
        </authorList>
    </citation>
    <scope>NUCLEOTIDE SEQUENCE [LARGE SCALE GENOMIC DNA]</scope>
    <source>
        <strain>ATCC BAA-125 / DSM 18197 / FERM 7344 / JCM 9153 / C-125</strain>
    </source>
</reference>
<evidence type="ECO:0000250" key="1"/>
<evidence type="ECO:0000255" key="2">
    <source>
        <dbReference type="PROSITE-ProRule" id="PRU00532"/>
    </source>
</evidence>
<evidence type="ECO:0000305" key="3"/>
<proteinExistence type="inferred from homology"/>
<protein>
    <recommendedName>
        <fullName>L-2,4-diaminobutyric acid acetyltransferase</fullName>
        <shortName>DABA acetyltransferase</shortName>
        <ecNumber>2.3.1.178</ecNumber>
    </recommendedName>
</protein>
<keyword id="KW-0012">Acyltransferase</keyword>
<keyword id="KW-1185">Reference proteome</keyword>
<keyword id="KW-0808">Transferase</keyword>
<gene>
    <name type="primary">ectA</name>
    <name type="ordered locus">BH0920</name>
</gene>
<accession>Q9KED3</accession>
<sequence length="189" mass="21048">MQVQCNEKAFKGGFIINSQIATAPPKTLDTTITIGKPTVEDGAAMWELVNKSTLDTNSPYKYIMMCEYFAETCVVAKENERLVGFVTAFIPPEHQDVIFVWQIGVDSSQRGKGLASKLLQELISRDICSNVNYVEATVTPSNKASQALFQKLAREYNTQCEVSECFSEDLFPGDDHEAELTFRIGPLHP</sequence>
<comment type="function">
    <text evidence="1">Catalyzes the acetylation of L-2,4-diaminobutyrate (DABA) to gamma-N-acetyl-alpha,gamma-diaminobutyric acid (ADABA) with acetyl coenzyme A.</text>
</comment>
<comment type="catalytic activity">
    <reaction>
        <text>L-2,4-diaminobutanoate + acetyl-CoA = (2S)-4-acetamido-2-aminobutanoate + CoA + H(+)</text>
        <dbReference type="Rhea" id="RHEA:16901"/>
        <dbReference type="ChEBI" id="CHEBI:15378"/>
        <dbReference type="ChEBI" id="CHEBI:57287"/>
        <dbReference type="ChEBI" id="CHEBI:57288"/>
        <dbReference type="ChEBI" id="CHEBI:58761"/>
        <dbReference type="ChEBI" id="CHEBI:58929"/>
        <dbReference type="EC" id="2.3.1.178"/>
    </reaction>
</comment>
<comment type="pathway">
    <text>Amine and polyamine biosynthesis; ectoine biosynthesis; L-ectoine from L-aspartate 4-semialdehyde: step 2/3.</text>
</comment>
<comment type="similarity">
    <text evidence="3">Belongs to the acetyltransferase family. EctA subfamily.</text>
</comment>
<feature type="chain" id="PRO_0000220080" description="L-2,4-diaminobutyric acid acetyltransferase">
    <location>
        <begin position="1"/>
        <end position="189"/>
    </location>
</feature>
<feature type="domain" description="N-acetyltransferase" evidence="2">
    <location>
        <begin position="32"/>
        <end position="183"/>
    </location>
</feature>
<organism>
    <name type="scientific">Halalkalibacterium halodurans (strain ATCC BAA-125 / DSM 18197 / FERM 7344 / JCM 9153 / C-125)</name>
    <name type="common">Bacillus halodurans</name>
    <dbReference type="NCBI Taxonomy" id="272558"/>
    <lineage>
        <taxon>Bacteria</taxon>
        <taxon>Bacillati</taxon>
        <taxon>Bacillota</taxon>
        <taxon>Bacilli</taxon>
        <taxon>Bacillales</taxon>
        <taxon>Bacillaceae</taxon>
        <taxon>Halalkalibacterium (ex Joshi et al. 2022)</taxon>
    </lineage>
</organism>
<dbReference type="EC" id="2.3.1.178"/>
<dbReference type="EMBL" id="BA000004">
    <property type="protein sequence ID" value="BAB04639.1"/>
    <property type="molecule type" value="Genomic_DNA"/>
</dbReference>
<dbReference type="PIR" id="H83764">
    <property type="entry name" value="H83764"/>
</dbReference>
<dbReference type="SMR" id="Q9KED3"/>
<dbReference type="STRING" id="272558.gene:10726794"/>
<dbReference type="KEGG" id="bha:BH0920"/>
<dbReference type="eggNOG" id="COG0456">
    <property type="taxonomic scope" value="Bacteria"/>
</dbReference>
<dbReference type="HOGENOM" id="CLU_111896_0_0_9"/>
<dbReference type="OrthoDB" id="2436196at2"/>
<dbReference type="UniPathway" id="UPA00067">
    <property type="reaction ID" value="UER00122"/>
</dbReference>
<dbReference type="Proteomes" id="UP000001258">
    <property type="component" value="Chromosome"/>
</dbReference>
<dbReference type="GO" id="GO:0033816">
    <property type="term" value="F:diaminobutyrate acetyltransferase activity"/>
    <property type="evidence" value="ECO:0007669"/>
    <property type="project" value="UniProtKB-EC"/>
</dbReference>
<dbReference type="GO" id="GO:0019491">
    <property type="term" value="P:ectoine biosynthetic process"/>
    <property type="evidence" value="ECO:0007669"/>
    <property type="project" value="UniProtKB-UniPathway"/>
</dbReference>
<dbReference type="CDD" id="cd04301">
    <property type="entry name" value="NAT_SF"/>
    <property type="match status" value="1"/>
</dbReference>
<dbReference type="Gene3D" id="3.40.630.30">
    <property type="match status" value="1"/>
</dbReference>
<dbReference type="InterPro" id="IPR016181">
    <property type="entry name" value="Acyl_CoA_acyltransferase"/>
</dbReference>
<dbReference type="InterPro" id="IPR012772">
    <property type="entry name" value="Ectoine_EctA"/>
</dbReference>
<dbReference type="InterPro" id="IPR000182">
    <property type="entry name" value="GNAT_dom"/>
</dbReference>
<dbReference type="NCBIfam" id="TIGR02406">
    <property type="entry name" value="ectoine_EctA"/>
    <property type="match status" value="1"/>
</dbReference>
<dbReference type="PANTHER" id="PTHR43072">
    <property type="entry name" value="N-ACETYLTRANSFERASE"/>
    <property type="match status" value="1"/>
</dbReference>
<dbReference type="PANTHER" id="PTHR43072:SF23">
    <property type="entry name" value="UPF0039 PROTEIN C11D3.02C"/>
    <property type="match status" value="1"/>
</dbReference>
<dbReference type="Pfam" id="PF00583">
    <property type="entry name" value="Acetyltransf_1"/>
    <property type="match status" value="1"/>
</dbReference>
<dbReference type="SUPFAM" id="SSF55729">
    <property type="entry name" value="Acyl-CoA N-acyltransferases (Nat)"/>
    <property type="match status" value="1"/>
</dbReference>
<dbReference type="PROSITE" id="PS51186">
    <property type="entry name" value="GNAT"/>
    <property type="match status" value="1"/>
</dbReference>
<name>ECTA_HALH5</name>